<sequence>MQKSSMLKKEAAIARRQWYLVDATDLVLGRLSVKVADILRGKNKVDYTPNVDAGDYVIIVNSDKVVLTGQKALRENWYNHSHYIGGLRTRSGEEMISKYSDELIRRSVKGMLPKNKLSKQILNKLFIYKNDKHSHEAQQPTILELKLK</sequence>
<keyword id="KW-0687">Ribonucleoprotein</keyword>
<keyword id="KW-0689">Ribosomal protein</keyword>
<feature type="chain" id="PRO_1000144194" description="Large ribosomal subunit protein uL13">
    <location>
        <begin position="1"/>
        <end position="148"/>
    </location>
</feature>
<dbReference type="EMBL" id="CP001184">
    <property type="protein sequence ID" value="ACI59947.1"/>
    <property type="molecule type" value="Genomic_DNA"/>
</dbReference>
<dbReference type="RefSeq" id="WP_012560238.1">
    <property type="nucleotide sequence ID" value="NC_011374.1"/>
</dbReference>
<dbReference type="SMR" id="B5ZC91"/>
<dbReference type="STRING" id="565575.UUR10_0677"/>
<dbReference type="KEGG" id="uue:UUR10_0677"/>
<dbReference type="eggNOG" id="COG0102">
    <property type="taxonomic scope" value="Bacteria"/>
</dbReference>
<dbReference type="HOGENOM" id="CLU_082184_2_2_14"/>
<dbReference type="OrthoDB" id="9801330at2"/>
<dbReference type="Proteomes" id="UP000002018">
    <property type="component" value="Chromosome"/>
</dbReference>
<dbReference type="GO" id="GO:0022625">
    <property type="term" value="C:cytosolic large ribosomal subunit"/>
    <property type="evidence" value="ECO:0007669"/>
    <property type="project" value="TreeGrafter"/>
</dbReference>
<dbReference type="GO" id="GO:0003729">
    <property type="term" value="F:mRNA binding"/>
    <property type="evidence" value="ECO:0007669"/>
    <property type="project" value="TreeGrafter"/>
</dbReference>
<dbReference type="GO" id="GO:0003735">
    <property type="term" value="F:structural constituent of ribosome"/>
    <property type="evidence" value="ECO:0007669"/>
    <property type="project" value="InterPro"/>
</dbReference>
<dbReference type="GO" id="GO:0017148">
    <property type="term" value="P:negative regulation of translation"/>
    <property type="evidence" value="ECO:0007669"/>
    <property type="project" value="TreeGrafter"/>
</dbReference>
<dbReference type="GO" id="GO:0006412">
    <property type="term" value="P:translation"/>
    <property type="evidence" value="ECO:0007669"/>
    <property type="project" value="UniProtKB-UniRule"/>
</dbReference>
<dbReference type="CDD" id="cd00392">
    <property type="entry name" value="Ribosomal_L13"/>
    <property type="match status" value="1"/>
</dbReference>
<dbReference type="Gene3D" id="3.90.1180.10">
    <property type="entry name" value="Ribosomal protein L13"/>
    <property type="match status" value="1"/>
</dbReference>
<dbReference type="HAMAP" id="MF_01366">
    <property type="entry name" value="Ribosomal_uL13"/>
    <property type="match status" value="1"/>
</dbReference>
<dbReference type="InterPro" id="IPR005822">
    <property type="entry name" value="Ribosomal_uL13"/>
</dbReference>
<dbReference type="InterPro" id="IPR005823">
    <property type="entry name" value="Ribosomal_uL13_bac-type"/>
</dbReference>
<dbReference type="InterPro" id="IPR023563">
    <property type="entry name" value="Ribosomal_uL13_CS"/>
</dbReference>
<dbReference type="InterPro" id="IPR036899">
    <property type="entry name" value="Ribosomal_uL13_sf"/>
</dbReference>
<dbReference type="NCBIfam" id="TIGR01066">
    <property type="entry name" value="rplM_bact"/>
    <property type="match status" value="1"/>
</dbReference>
<dbReference type="PANTHER" id="PTHR11545:SF2">
    <property type="entry name" value="LARGE RIBOSOMAL SUBUNIT PROTEIN UL13M"/>
    <property type="match status" value="1"/>
</dbReference>
<dbReference type="PANTHER" id="PTHR11545">
    <property type="entry name" value="RIBOSOMAL PROTEIN L13"/>
    <property type="match status" value="1"/>
</dbReference>
<dbReference type="Pfam" id="PF00572">
    <property type="entry name" value="Ribosomal_L13"/>
    <property type="match status" value="1"/>
</dbReference>
<dbReference type="PIRSF" id="PIRSF002181">
    <property type="entry name" value="Ribosomal_L13"/>
    <property type="match status" value="1"/>
</dbReference>
<dbReference type="SUPFAM" id="SSF52161">
    <property type="entry name" value="Ribosomal protein L13"/>
    <property type="match status" value="1"/>
</dbReference>
<dbReference type="PROSITE" id="PS00783">
    <property type="entry name" value="RIBOSOMAL_L13"/>
    <property type="match status" value="1"/>
</dbReference>
<reference key="1">
    <citation type="submission" date="2008-10" db="EMBL/GenBank/DDBJ databases">
        <title>Genome sequence of Ureaplasma urealyticum serovar 10 ATCC-33699.</title>
        <authorList>
            <person name="Shrivastava S."/>
            <person name="Methe B.A."/>
            <person name="Glass J."/>
            <person name="White K."/>
            <person name="Duffy L.B."/>
        </authorList>
    </citation>
    <scope>NUCLEOTIDE SEQUENCE [LARGE SCALE GENOMIC DNA]</scope>
    <source>
        <strain>ATCC 33699 / Western</strain>
    </source>
</reference>
<comment type="function">
    <text evidence="1">This protein is one of the early assembly proteins of the 50S ribosomal subunit, although it is not seen to bind rRNA by itself. It is important during the early stages of 50S assembly.</text>
</comment>
<comment type="subunit">
    <text evidence="1">Part of the 50S ribosomal subunit.</text>
</comment>
<comment type="similarity">
    <text evidence="1">Belongs to the universal ribosomal protein uL13 family.</text>
</comment>
<name>RL13_UREU1</name>
<protein>
    <recommendedName>
        <fullName evidence="1">Large ribosomal subunit protein uL13</fullName>
    </recommendedName>
    <alternativeName>
        <fullName evidence="2">50S ribosomal protein L13</fullName>
    </alternativeName>
</protein>
<organism>
    <name type="scientific">Ureaplasma urealyticum serovar 10 (strain ATCC 33699 / Western)</name>
    <dbReference type="NCBI Taxonomy" id="565575"/>
    <lineage>
        <taxon>Bacteria</taxon>
        <taxon>Bacillati</taxon>
        <taxon>Mycoplasmatota</taxon>
        <taxon>Mycoplasmoidales</taxon>
        <taxon>Mycoplasmoidaceae</taxon>
        <taxon>Ureaplasma</taxon>
    </lineage>
</organism>
<proteinExistence type="inferred from homology"/>
<evidence type="ECO:0000255" key="1">
    <source>
        <dbReference type="HAMAP-Rule" id="MF_01366"/>
    </source>
</evidence>
<evidence type="ECO:0000305" key="2"/>
<accession>B5ZC91</accession>
<gene>
    <name evidence="1" type="primary">rplM</name>
    <name type="ordered locus">UUR10_0677</name>
</gene>